<evidence type="ECO:0000250" key="1"/>
<evidence type="ECO:0000255" key="2"/>
<evidence type="ECO:0000256" key="3">
    <source>
        <dbReference type="SAM" id="MobiDB-lite"/>
    </source>
</evidence>
<evidence type="ECO:0000305" key="4"/>
<organism>
    <name type="scientific">Arabidopsis thaliana</name>
    <name type="common">Mouse-ear cress</name>
    <dbReference type="NCBI Taxonomy" id="3702"/>
    <lineage>
        <taxon>Eukaryota</taxon>
        <taxon>Viridiplantae</taxon>
        <taxon>Streptophyta</taxon>
        <taxon>Embryophyta</taxon>
        <taxon>Tracheophyta</taxon>
        <taxon>Spermatophyta</taxon>
        <taxon>Magnoliopsida</taxon>
        <taxon>eudicotyledons</taxon>
        <taxon>Gunneridae</taxon>
        <taxon>Pentapetalae</taxon>
        <taxon>rosids</taxon>
        <taxon>malvids</taxon>
        <taxon>Brassicales</taxon>
        <taxon>Brassicaceae</taxon>
        <taxon>Camelineae</taxon>
        <taxon>Arabidopsis</taxon>
    </lineage>
</organism>
<feature type="chain" id="PRO_0000212748" description="Probable disease resistance protein At1g61190">
    <location>
        <begin position="1"/>
        <end position="967"/>
    </location>
</feature>
<feature type="domain" description="NB-ARC">
    <location>
        <begin position="138"/>
        <end position="441"/>
    </location>
</feature>
<feature type="repeat" description="LRR 1">
    <location>
        <begin position="516"/>
        <end position="537"/>
    </location>
</feature>
<feature type="repeat" description="LRR 2">
    <location>
        <begin position="538"/>
        <end position="559"/>
    </location>
</feature>
<feature type="repeat" description="LRR 3">
    <location>
        <begin position="562"/>
        <end position="585"/>
    </location>
</feature>
<feature type="repeat" description="LRR 4">
    <location>
        <begin position="586"/>
        <end position="608"/>
    </location>
</feature>
<feature type="repeat" description="LRR 5">
    <location>
        <begin position="609"/>
        <end position="631"/>
    </location>
</feature>
<feature type="region of interest" description="Disordered" evidence="3">
    <location>
        <begin position="132"/>
        <end position="153"/>
    </location>
</feature>
<feature type="coiled-coil region" evidence="2">
    <location>
        <begin position="20"/>
        <end position="68"/>
    </location>
</feature>
<feature type="binding site" evidence="2">
    <location>
        <begin position="180"/>
        <end position="187"/>
    </location>
    <ligand>
        <name>ATP</name>
        <dbReference type="ChEBI" id="CHEBI:30616"/>
    </ligand>
</feature>
<keyword id="KW-0067">ATP-binding</keyword>
<keyword id="KW-0175">Coiled coil</keyword>
<keyword id="KW-0433">Leucine-rich repeat</keyword>
<keyword id="KW-0547">Nucleotide-binding</keyword>
<keyword id="KW-0611">Plant defense</keyword>
<keyword id="KW-1185">Reference proteome</keyword>
<keyword id="KW-0677">Repeat</keyword>
<dbReference type="EMBL" id="AC002294">
    <property type="protein sequence ID" value="AAB71476.1"/>
    <property type="molecule type" value="Genomic_DNA"/>
</dbReference>
<dbReference type="EMBL" id="CP002684">
    <property type="protein sequence ID" value="AEE33801.1"/>
    <property type="molecule type" value="Genomic_DNA"/>
</dbReference>
<dbReference type="PIR" id="G96637">
    <property type="entry name" value="G96637"/>
</dbReference>
<dbReference type="RefSeq" id="NP_176314.1">
    <property type="nucleotide sequence ID" value="NM_104800.1"/>
</dbReference>
<dbReference type="SMR" id="O22727"/>
<dbReference type="FunCoup" id="O22727">
    <property type="interactions" value="553"/>
</dbReference>
<dbReference type="STRING" id="3702.O22727"/>
<dbReference type="iPTMnet" id="O22727"/>
<dbReference type="PaxDb" id="3702-AT1G61190.1"/>
<dbReference type="ProteomicsDB" id="224313"/>
<dbReference type="EnsemblPlants" id="AT1G61190.1">
    <property type="protein sequence ID" value="AT1G61190.1"/>
    <property type="gene ID" value="AT1G61190"/>
</dbReference>
<dbReference type="GeneID" id="842412"/>
<dbReference type="Gramene" id="AT1G61190.1">
    <property type="protein sequence ID" value="AT1G61190.1"/>
    <property type="gene ID" value="AT1G61190"/>
</dbReference>
<dbReference type="KEGG" id="ath:AT1G61190"/>
<dbReference type="Araport" id="AT1G61190"/>
<dbReference type="TAIR" id="AT1G61190"/>
<dbReference type="eggNOG" id="KOG4658">
    <property type="taxonomic scope" value="Eukaryota"/>
</dbReference>
<dbReference type="HOGENOM" id="CLU_000427_4_0_1"/>
<dbReference type="InParanoid" id="O22727"/>
<dbReference type="PhylomeDB" id="O22727"/>
<dbReference type="PRO" id="PR:O22727"/>
<dbReference type="Proteomes" id="UP000006548">
    <property type="component" value="Chromosome 1"/>
</dbReference>
<dbReference type="ExpressionAtlas" id="O22727">
    <property type="expression patterns" value="baseline and differential"/>
</dbReference>
<dbReference type="GO" id="GO:0043531">
    <property type="term" value="F:ADP binding"/>
    <property type="evidence" value="ECO:0007669"/>
    <property type="project" value="InterPro"/>
</dbReference>
<dbReference type="GO" id="GO:0005524">
    <property type="term" value="F:ATP binding"/>
    <property type="evidence" value="ECO:0007669"/>
    <property type="project" value="UniProtKB-KW"/>
</dbReference>
<dbReference type="GO" id="GO:0006952">
    <property type="term" value="P:defense response"/>
    <property type="evidence" value="ECO:0007669"/>
    <property type="project" value="UniProtKB-KW"/>
</dbReference>
<dbReference type="FunFam" id="3.80.10.10:FF:001644">
    <property type="entry name" value="LRR and NB-ARC domains-containing disease resistance protein"/>
    <property type="match status" value="1"/>
</dbReference>
<dbReference type="FunFam" id="3.80.10.10:FF:001429">
    <property type="entry name" value="Probable disease resistance protein At1g61190"/>
    <property type="match status" value="1"/>
</dbReference>
<dbReference type="FunFam" id="3.40.50.300:FF:001091">
    <property type="entry name" value="Probable disease resistance protein At1g61300"/>
    <property type="match status" value="1"/>
</dbReference>
<dbReference type="FunFam" id="1.10.10.10:FF:000322">
    <property type="entry name" value="Probable disease resistance protein At1g63360"/>
    <property type="match status" value="1"/>
</dbReference>
<dbReference type="FunFam" id="1.10.8.430:FF:000003">
    <property type="entry name" value="Probable disease resistance protein At5g66910"/>
    <property type="match status" value="1"/>
</dbReference>
<dbReference type="Gene3D" id="1.10.8.430">
    <property type="entry name" value="Helical domain of apoptotic protease-activating factors"/>
    <property type="match status" value="1"/>
</dbReference>
<dbReference type="Gene3D" id="3.40.50.300">
    <property type="entry name" value="P-loop containing nucleotide triphosphate hydrolases"/>
    <property type="match status" value="1"/>
</dbReference>
<dbReference type="Gene3D" id="3.80.10.10">
    <property type="entry name" value="Ribonuclease Inhibitor"/>
    <property type="match status" value="1"/>
</dbReference>
<dbReference type="Gene3D" id="1.10.10.10">
    <property type="entry name" value="Winged helix-like DNA-binding domain superfamily/Winged helix DNA-binding domain"/>
    <property type="match status" value="1"/>
</dbReference>
<dbReference type="InterPro" id="IPR042197">
    <property type="entry name" value="Apaf_helical"/>
</dbReference>
<dbReference type="InterPro" id="IPR032675">
    <property type="entry name" value="LRR_dom_sf"/>
</dbReference>
<dbReference type="InterPro" id="IPR055414">
    <property type="entry name" value="LRR_R13L4/SHOC2-like"/>
</dbReference>
<dbReference type="InterPro" id="IPR002182">
    <property type="entry name" value="NB-ARC"/>
</dbReference>
<dbReference type="InterPro" id="IPR027417">
    <property type="entry name" value="P-loop_NTPase"/>
</dbReference>
<dbReference type="InterPro" id="IPR050905">
    <property type="entry name" value="Plant_NBS-LRR"/>
</dbReference>
<dbReference type="InterPro" id="IPR036388">
    <property type="entry name" value="WH-like_DNA-bd_sf"/>
</dbReference>
<dbReference type="PANTHER" id="PTHR33463:SF220">
    <property type="entry name" value="NB-ARC DOMAIN-CONTAINING PROTEIN"/>
    <property type="match status" value="1"/>
</dbReference>
<dbReference type="PANTHER" id="PTHR33463">
    <property type="entry name" value="NB-ARC DOMAIN-CONTAINING PROTEIN-RELATED"/>
    <property type="match status" value="1"/>
</dbReference>
<dbReference type="Pfam" id="PF23598">
    <property type="entry name" value="LRR_14"/>
    <property type="match status" value="1"/>
</dbReference>
<dbReference type="Pfam" id="PF00931">
    <property type="entry name" value="NB-ARC"/>
    <property type="match status" value="1"/>
</dbReference>
<dbReference type="Pfam" id="PF23559">
    <property type="entry name" value="WH_DRP"/>
    <property type="match status" value="1"/>
</dbReference>
<dbReference type="PRINTS" id="PR00364">
    <property type="entry name" value="DISEASERSIST"/>
</dbReference>
<dbReference type="SUPFAM" id="SSF52058">
    <property type="entry name" value="L domain-like"/>
    <property type="match status" value="1"/>
</dbReference>
<dbReference type="SUPFAM" id="SSF52540">
    <property type="entry name" value="P-loop containing nucleoside triphosphate hydrolases"/>
    <property type="match status" value="1"/>
</dbReference>
<gene>
    <name type="ordered locus">At1g61190</name>
    <name type="ORF">F11P17.9</name>
</gene>
<reference key="1">
    <citation type="journal article" date="2000" name="Nature">
        <title>Sequence and analysis of chromosome 1 of the plant Arabidopsis thaliana.</title>
        <authorList>
            <person name="Theologis A."/>
            <person name="Ecker J.R."/>
            <person name="Palm C.J."/>
            <person name="Federspiel N.A."/>
            <person name="Kaul S."/>
            <person name="White O."/>
            <person name="Alonso J."/>
            <person name="Altafi H."/>
            <person name="Araujo R."/>
            <person name="Bowman C.L."/>
            <person name="Brooks S.Y."/>
            <person name="Buehler E."/>
            <person name="Chan A."/>
            <person name="Chao Q."/>
            <person name="Chen H."/>
            <person name="Cheuk R.F."/>
            <person name="Chin C.W."/>
            <person name="Chung M.K."/>
            <person name="Conn L."/>
            <person name="Conway A.B."/>
            <person name="Conway A.R."/>
            <person name="Creasy T.H."/>
            <person name="Dewar K."/>
            <person name="Dunn P."/>
            <person name="Etgu P."/>
            <person name="Feldblyum T.V."/>
            <person name="Feng J.-D."/>
            <person name="Fong B."/>
            <person name="Fujii C.Y."/>
            <person name="Gill J.E."/>
            <person name="Goldsmith A.D."/>
            <person name="Haas B."/>
            <person name="Hansen N.F."/>
            <person name="Hughes B."/>
            <person name="Huizar L."/>
            <person name="Hunter J.L."/>
            <person name="Jenkins J."/>
            <person name="Johnson-Hopson C."/>
            <person name="Khan S."/>
            <person name="Khaykin E."/>
            <person name="Kim C.J."/>
            <person name="Koo H.L."/>
            <person name="Kremenetskaia I."/>
            <person name="Kurtz D.B."/>
            <person name="Kwan A."/>
            <person name="Lam B."/>
            <person name="Langin-Hooper S."/>
            <person name="Lee A."/>
            <person name="Lee J.M."/>
            <person name="Lenz C.A."/>
            <person name="Li J.H."/>
            <person name="Li Y.-P."/>
            <person name="Lin X."/>
            <person name="Liu S.X."/>
            <person name="Liu Z.A."/>
            <person name="Luros J.S."/>
            <person name="Maiti R."/>
            <person name="Marziali A."/>
            <person name="Militscher J."/>
            <person name="Miranda M."/>
            <person name="Nguyen M."/>
            <person name="Nierman W.C."/>
            <person name="Osborne B.I."/>
            <person name="Pai G."/>
            <person name="Peterson J."/>
            <person name="Pham P.K."/>
            <person name="Rizzo M."/>
            <person name="Rooney T."/>
            <person name="Rowley D."/>
            <person name="Sakano H."/>
            <person name="Salzberg S.L."/>
            <person name="Schwartz J.R."/>
            <person name="Shinn P."/>
            <person name="Southwick A.M."/>
            <person name="Sun H."/>
            <person name="Tallon L.J."/>
            <person name="Tambunga G."/>
            <person name="Toriumi M.J."/>
            <person name="Town C.D."/>
            <person name="Utterback T."/>
            <person name="Van Aken S."/>
            <person name="Vaysberg M."/>
            <person name="Vysotskaia V.S."/>
            <person name="Walker M."/>
            <person name="Wu D."/>
            <person name="Yu G."/>
            <person name="Fraser C.M."/>
            <person name="Venter J.C."/>
            <person name="Davis R.W."/>
        </authorList>
    </citation>
    <scope>NUCLEOTIDE SEQUENCE [LARGE SCALE GENOMIC DNA]</scope>
    <source>
        <strain>cv. Columbia</strain>
    </source>
</reference>
<reference key="2">
    <citation type="journal article" date="2017" name="Plant J.">
        <title>Araport11: a complete reannotation of the Arabidopsis thaliana reference genome.</title>
        <authorList>
            <person name="Cheng C.Y."/>
            <person name="Krishnakumar V."/>
            <person name="Chan A.P."/>
            <person name="Thibaud-Nissen F."/>
            <person name="Schobel S."/>
            <person name="Town C.D."/>
        </authorList>
    </citation>
    <scope>GENOME REANNOTATION</scope>
    <source>
        <strain>cv. Columbia</strain>
    </source>
</reference>
<protein>
    <recommendedName>
        <fullName>Probable disease resistance protein At1g61190</fullName>
    </recommendedName>
</protein>
<comment type="function">
    <text evidence="1">Probable disease resistance protein.</text>
</comment>
<comment type="domain">
    <text evidence="1">The LRR repeats probably act as specificity determinant of pathogen recognition.</text>
</comment>
<comment type="similarity">
    <text evidence="4">Belongs to the disease resistance NB-LRR family.</text>
</comment>
<comment type="online information" name="NIB-LRRS">
    <link uri="http://niblrrs.ucdavis.edu"/>
    <text>Functional and comparative genomics of disease resistance gene homologs</text>
</comment>
<sequence>MGNFVCIEISGDQMLDRIIRCLCGKGYIRNLEKNLRALQREMEDLRATQHEVQNKVAREESRHQQRLEAVQVWLDRVNSIDIECKDLLSVSPVELQKLCLCGLCSKYVCSSYKYGKRVFLLLEEVTKLKSEGNFDEVSQPPPRSEVEERPTQPTIGQEEMLKKAWNRLMEDGVGIMGLHGMGGVGKTTLFKKIHNKFAETGGTFDIVIWIVVSQGAKLSKLQEDIAEKLHLCDDLWKNKNESDKATDIHRVLKGKRFVLMLDDIWEKVDLEAIGIPYPSEVNKCKVAFTTRDQKVCGQMGDHKPMQVKCLEPEDAWELFKNKVGDNTLRSDPVIVGLAREVAQKCRGLPLALSCIGETMASKTMVQEWEHAIDVLTRSAAEFSDMQNKILPILKYSYDSLEDEHIKSCFLYCALFPEDDKIDTKTLINKWICEGFIGEDQVIKRARNKGYEMLGTLIRANLLTNDRGFVKWHVVMHDVVREMALWIASDFGKQKENYVVRARVGLHEIPKVKDWGAVRRMSLMMNEIEEITCESKCSELTTLFLQSNQLKNLSGEFIRYMQKLVVLDLSHNPDFNELPEQISGLVSLQYLDLSWTRIEQLPVGLKELKKLIFLNLCFTERLCSISGISRLLSLRWLSLRESNVHGDASVLKELQQLENLQDLRITESAELISLDQRLAKLISVLRIEGFLQKPFDLSFLASMENLYGLLVENSYFSEINIKCRESETESSYLHINPKIPCFTNLTGLIIMKCHSMKDLTWILFAPNLVNLDIRDSREVGEIINKEKAINLTSIITPFQKLERLFLYGLPKLESIYWSPLPFPLLSNIVVKYCPKLRKLPLNATSVPLVEEFEIRMDPPEQENELEWEDEDTKNRFLPSIKPLVRRLKIHYSGMGFLNVKNQNPRFFFYCFIYLLVVHLDCIIDLHSDTSGMCCVVHLDYVFHFPFVFPKTFCILFRLHFYTIKSLCV</sequence>
<name>DRL16_ARATH</name>
<proteinExistence type="inferred from homology"/>
<accession>O22727</accession>